<dbReference type="EC" id="3.1.-.-"/>
<dbReference type="EMBL" id="BA000018">
    <property type="protein sequence ID" value="BAB43155.1"/>
    <property type="molecule type" value="Genomic_DNA"/>
</dbReference>
<dbReference type="PIR" id="B89999">
    <property type="entry name" value="B89999"/>
</dbReference>
<dbReference type="RefSeq" id="WP_000621175.1">
    <property type="nucleotide sequence ID" value="NC_002745.2"/>
</dbReference>
<dbReference type="PDB" id="2MF2">
    <property type="method" value="NMR"/>
    <property type="chains" value="A/B=2-120"/>
</dbReference>
<dbReference type="PDB" id="4MZM">
    <property type="method" value="X-ray"/>
    <property type="resolution" value="2.10 A"/>
    <property type="chains" value="A/B/C/D=2-120"/>
</dbReference>
<dbReference type="PDB" id="4MZP">
    <property type="method" value="X-ray"/>
    <property type="resolution" value="2.70 A"/>
    <property type="chains" value="A/B/C/D/E/F/G/H=2-120"/>
</dbReference>
<dbReference type="PDB" id="4MZT">
    <property type="method" value="X-ray"/>
    <property type="resolution" value="2.30 A"/>
    <property type="chains" value="A/B=2-120"/>
</dbReference>
<dbReference type="PDB" id="9G1Y">
    <property type="method" value="X-ray"/>
    <property type="resolution" value="2.70 A"/>
    <property type="chains" value="A/B=2-120"/>
</dbReference>
<dbReference type="PDB" id="9G2A">
    <property type="method" value="X-ray"/>
    <property type="resolution" value="2.05 A"/>
    <property type="chains" value="A/B=2-120"/>
</dbReference>
<dbReference type="PDB" id="9G2G">
    <property type="method" value="X-ray"/>
    <property type="resolution" value="1.80 A"/>
    <property type="chains" value="A/B=2-120"/>
</dbReference>
<dbReference type="PDB" id="9G48">
    <property type="method" value="X-ray"/>
    <property type="resolution" value="2.14 A"/>
    <property type="chains" value="A/B=2-120"/>
</dbReference>
<dbReference type="PDB" id="9G4G">
    <property type="method" value="X-ray"/>
    <property type="resolution" value="2.90 A"/>
    <property type="chains" value="A=2-120"/>
</dbReference>
<dbReference type="PDB" id="9G5L">
    <property type="method" value="X-ray"/>
    <property type="resolution" value="1.82 A"/>
    <property type="chains" value="A=2-120"/>
</dbReference>
<dbReference type="PDB" id="9G5Z">
    <property type="method" value="X-ray"/>
    <property type="resolution" value="3.43 A"/>
    <property type="chains" value="A/B=2-120"/>
</dbReference>
<dbReference type="PDB" id="9G7K">
    <property type="method" value="X-ray"/>
    <property type="resolution" value="2.09 A"/>
    <property type="chains" value="A/B/E/F=2-120"/>
</dbReference>
<dbReference type="PDBsum" id="2MF2"/>
<dbReference type="PDBsum" id="4MZM"/>
<dbReference type="PDBsum" id="4MZP"/>
<dbReference type="PDBsum" id="4MZT"/>
<dbReference type="PDBsum" id="9G1Y"/>
<dbReference type="PDBsum" id="9G2A"/>
<dbReference type="PDBsum" id="9G2G"/>
<dbReference type="PDBsum" id="9G48"/>
<dbReference type="PDBsum" id="9G4G"/>
<dbReference type="PDBsum" id="9G5L"/>
<dbReference type="PDBsum" id="9G5Z"/>
<dbReference type="PDBsum" id="9G7K"/>
<dbReference type="SMR" id="Q7A4G9"/>
<dbReference type="EnsemblBacteria" id="BAB43155">
    <property type="protein sequence ID" value="BAB43155"/>
    <property type="gene ID" value="BAB43155"/>
</dbReference>
<dbReference type="KEGG" id="sau:SA1873"/>
<dbReference type="HOGENOM" id="CLU_121823_1_0_9"/>
<dbReference type="EvolutionaryTrace" id="Q7A4G9"/>
<dbReference type="GO" id="GO:0003677">
    <property type="term" value="F:DNA binding"/>
    <property type="evidence" value="ECO:0007669"/>
    <property type="project" value="InterPro"/>
</dbReference>
<dbReference type="GO" id="GO:0003723">
    <property type="term" value="F:RNA binding"/>
    <property type="evidence" value="ECO:0007669"/>
    <property type="project" value="UniProtKB-KW"/>
</dbReference>
<dbReference type="GO" id="GO:0004521">
    <property type="term" value="F:RNA endonuclease activity"/>
    <property type="evidence" value="ECO:0007669"/>
    <property type="project" value="TreeGrafter"/>
</dbReference>
<dbReference type="GO" id="GO:0006402">
    <property type="term" value="P:mRNA catabolic process"/>
    <property type="evidence" value="ECO:0007669"/>
    <property type="project" value="TreeGrafter"/>
</dbReference>
<dbReference type="GO" id="GO:0016075">
    <property type="term" value="P:rRNA catabolic process"/>
    <property type="evidence" value="ECO:0007669"/>
    <property type="project" value="TreeGrafter"/>
</dbReference>
<dbReference type="Gene3D" id="2.30.30.110">
    <property type="match status" value="1"/>
</dbReference>
<dbReference type="InterPro" id="IPR003477">
    <property type="entry name" value="PemK-like"/>
</dbReference>
<dbReference type="InterPro" id="IPR011067">
    <property type="entry name" value="Plasmid_toxin/cell-grow_inhib"/>
</dbReference>
<dbReference type="PANTHER" id="PTHR33988:SF2">
    <property type="entry name" value="ENDORIBONUCLEASE MAZF"/>
    <property type="match status" value="1"/>
</dbReference>
<dbReference type="PANTHER" id="PTHR33988">
    <property type="entry name" value="ENDORIBONUCLEASE MAZF-RELATED"/>
    <property type="match status" value="1"/>
</dbReference>
<dbReference type="Pfam" id="PF02452">
    <property type="entry name" value="PemK_toxin"/>
    <property type="match status" value="1"/>
</dbReference>
<dbReference type="PIRSF" id="PIRSF033490">
    <property type="entry name" value="MazF"/>
    <property type="match status" value="1"/>
</dbReference>
<dbReference type="SUPFAM" id="SSF50118">
    <property type="entry name" value="Cell growth inhibitor/plasmid maintenance toxic component"/>
    <property type="match status" value="1"/>
</dbReference>
<keyword id="KW-0002">3D-structure</keyword>
<keyword id="KW-0255">Endonuclease</keyword>
<keyword id="KW-0378">Hydrolase</keyword>
<keyword id="KW-0540">Nuclease</keyword>
<keyword id="KW-0694">RNA-binding</keyword>
<keyword id="KW-1277">Toxin-antitoxin system</keyword>
<feature type="chain" id="PRO_0000330701" description="Endoribonuclease MazF">
    <location>
        <begin position="1"/>
        <end position="120"/>
    </location>
</feature>
<feature type="strand" evidence="6">
    <location>
        <begin position="6"/>
        <end position="11"/>
    </location>
</feature>
<feature type="strand" evidence="6">
    <location>
        <begin position="22"/>
        <end position="28"/>
    </location>
</feature>
<feature type="helix" evidence="6">
    <location>
        <begin position="32"/>
        <end position="37"/>
    </location>
</feature>
<feature type="strand" evidence="6">
    <location>
        <begin position="39"/>
        <end position="49"/>
    </location>
</feature>
<feature type="strand" evidence="6">
    <location>
        <begin position="58"/>
        <end position="61"/>
    </location>
</feature>
<feature type="turn" evidence="6">
    <location>
        <begin position="63"/>
        <end position="67"/>
    </location>
</feature>
<feature type="strand" evidence="6">
    <location>
        <begin position="72"/>
        <end position="83"/>
    </location>
</feature>
<feature type="helix" evidence="6">
    <location>
        <begin position="84"/>
        <end position="86"/>
    </location>
</feature>
<feature type="strand" evidence="6">
    <location>
        <begin position="87"/>
        <end position="93"/>
    </location>
</feature>
<feature type="helix" evidence="6">
    <location>
        <begin position="96"/>
        <end position="109"/>
    </location>
</feature>
<comment type="function">
    <text evidence="1 2">Toxic component of a type II toxin-antitoxin (TA) system, cannot be expressed in E.coli in the absence of cognate antitoxin MazE (PubMed:24748664). Ribosome-independent, sequence-specific endoribonuclease that cleaves mRNA, thus inhibiting protein synthesis and inducing bacterial stasis; it cuts between the first and nucleotides of 5'-UACAU-3' in single-stranded RNA (By similarity). Its endoribnuclease activity is neutralized by coexpression with cognate antitoxin MazE (PubMed:24748664).</text>
</comment>
<comment type="biophysicochemical properties">
    <temperatureDependence>
        <text evidence="2">Thermostable at 90 degrees Celsius.</text>
    </temperatureDependence>
</comment>
<comment type="subunit">
    <text evidence="2 5">Homodimer. Forms a complex with MazE which inhibits the endoribonuclease activity of MazF.</text>
</comment>
<comment type="similarity">
    <text evidence="4">Belongs to the PemK/MazF family.</text>
</comment>
<accession>Q7A4G9</accession>
<proteinExistence type="evidence at protein level"/>
<evidence type="ECO:0000250" key="1">
    <source>
        <dbReference type="UniProtKB" id="A6QIR4"/>
    </source>
</evidence>
<evidence type="ECO:0000269" key="2">
    <source>
    </source>
</evidence>
<evidence type="ECO:0000303" key="3">
    <source>
    </source>
</evidence>
<evidence type="ECO:0000305" key="4"/>
<evidence type="ECO:0000305" key="5">
    <source>
    </source>
</evidence>
<evidence type="ECO:0007829" key="6">
    <source>
        <dbReference type="PDB" id="9G2A"/>
    </source>
</evidence>
<gene>
    <name type="primary">mazF</name>
    <name type="ordered locus">SA1873</name>
</gene>
<organism>
    <name type="scientific">Staphylococcus aureus (strain N315)</name>
    <dbReference type="NCBI Taxonomy" id="158879"/>
    <lineage>
        <taxon>Bacteria</taxon>
        <taxon>Bacillati</taxon>
        <taxon>Bacillota</taxon>
        <taxon>Bacilli</taxon>
        <taxon>Bacillales</taxon>
        <taxon>Staphylococcaceae</taxon>
        <taxon>Staphylococcus</taxon>
    </lineage>
</organism>
<protein>
    <recommendedName>
        <fullName>Endoribonuclease MazF</fullName>
        <ecNumber>3.1.-.-</ecNumber>
    </recommendedName>
    <alternativeName>
        <fullName evidence="3">SaMazF</fullName>
    </alternativeName>
    <alternativeName>
        <fullName>Toxin MazF</fullName>
    </alternativeName>
    <alternativeName>
        <fullName>mRNA interferase MazF</fullName>
    </alternativeName>
</protein>
<name>MAZF_STAAN</name>
<reference key="1">
    <citation type="journal article" date="2001" name="Lancet">
        <title>Whole genome sequencing of meticillin-resistant Staphylococcus aureus.</title>
        <authorList>
            <person name="Kuroda M."/>
            <person name="Ohta T."/>
            <person name="Uchiyama I."/>
            <person name="Baba T."/>
            <person name="Yuzawa H."/>
            <person name="Kobayashi I."/>
            <person name="Cui L."/>
            <person name="Oguchi A."/>
            <person name="Aoki K."/>
            <person name="Nagai Y."/>
            <person name="Lian J.-Q."/>
            <person name="Ito T."/>
            <person name="Kanamori M."/>
            <person name="Matsumaru H."/>
            <person name="Maruyama A."/>
            <person name="Murakami H."/>
            <person name="Hosoyama A."/>
            <person name="Mizutani-Ui Y."/>
            <person name="Takahashi N.K."/>
            <person name="Sawano T."/>
            <person name="Inoue R."/>
            <person name="Kaito C."/>
            <person name="Sekimizu K."/>
            <person name="Hirakawa H."/>
            <person name="Kuhara S."/>
            <person name="Goto S."/>
            <person name="Yabuzaki J."/>
            <person name="Kanehisa M."/>
            <person name="Yamashita A."/>
            <person name="Oshima K."/>
            <person name="Furuya K."/>
            <person name="Yoshino C."/>
            <person name="Shiba T."/>
            <person name="Hattori M."/>
            <person name="Ogasawara N."/>
            <person name="Hayashi H."/>
            <person name="Hiramatsu K."/>
        </authorList>
    </citation>
    <scope>NUCLEOTIDE SEQUENCE [LARGE SCALE GENOMIC DNA]</scope>
    <source>
        <strain>N315</strain>
    </source>
</reference>
<reference key="2">
    <citation type="submission" date="2007-10" db="UniProtKB">
        <title>Shotgun proteomic analysis of total and membrane protein extracts of S. aureus strain N315.</title>
        <authorList>
            <person name="Vaezzadeh A.R."/>
            <person name="Deshusses J."/>
            <person name="Lescuyer P."/>
            <person name="Hochstrasser D.F."/>
        </authorList>
    </citation>
    <scope>IDENTIFICATION BY MASS SPECTROMETRY [LARGE SCALE ANALYSIS]</scope>
    <source>
        <strain>N315</strain>
    </source>
</reference>
<reference key="3">
    <citation type="journal article" date="2011" name="Biomol. NMR. Assign.">
        <title>1H, 13C, and 15N backbone and side-chain chemical shift assignment of the staphylococcal MazF mRNA interferase.</title>
        <authorList>
            <person name="Zorzini V."/>
            <person name="Haesaerts S."/>
            <person name="Cheung A."/>
            <person name="Loris R."/>
            <person name="van Nuland N.A."/>
        </authorList>
    </citation>
    <scope>STRUCTURE BY NMR OF 2-120</scope>
    <scope>SUBUNIT</scope>
</reference>
<reference key="4">
    <citation type="journal article" date="2014" name="Nucleic Acids Res.">
        <title>Structural and biophysical characterization of Staphylococcus aureus SaMazF shows conservation of functional dynamics.</title>
        <authorList>
            <person name="Zorzini V."/>
            <person name="Buts L."/>
            <person name="Sleutel M."/>
            <person name="Garcia-Pino A."/>
            <person name="Talavera A."/>
            <person name="Haesaerts S."/>
            <person name="De Greve H."/>
            <person name="Cheung A."/>
            <person name="van Nuland N.A."/>
            <person name="Loris R."/>
        </authorList>
    </citation>
    <scope>X-RAY CRYSTALLOGRAPHY (2.10 ANGSTROMS) OF 2-120</scope>
    <scope>FUNCTION</scope>
    <scope>BIOPHYSICOCHEMICAL PROPERTIES</scope>
    <scope>SUBUNIT</scope>
</reference>
<sequence length="120" mass="13442">MIRRGDVYLADLSPVQGSEQGGVRPVVIIQNDTGNKYSPTVIVAAITGRINKAKIPTHVEIEKKKYKLDKDSVILLEQIRTLDKKRLKEKLTYLSDDKMKEVDNALMISLGLNAVAHQKN</sequence>